<name>MATK_PALCN</name>
<evidence type="ECO:0000255" key="1">
    <source>
        <dbReference type="HAMAP-Rule" id="MF_01390"/>
    </source>
</evidence>
<geneLocation type="chloroplast"/>
<comment type="function">
    <text evidence="1">Usually encoded in the trnK tRNA gene intron. Probably assists in splicing its own and other chloroplast group II introns.</text>
</comment>
<comment type="subcellular location">
    <subcellularLocation>
        <location>Plastid</location>
        <location>Chloroplast</location>
    </subcellularLocation>
</comment>
<comment type="similarity">
    <text evidence="1">Belongs to the intron maturase 2 family. MatK subfamily.</text>
</comment>
<accession>Q5D873</accession>
<organism>
    <name type="scientific">Palhinhaea cernua</name>
    <name type="common">Nodding clubmoss</name>
    <name type="synonym">Lycopodium cernuum</name>
    <dbReference type="NCBI Taxonomy" id="73621"/>
    <lineage>
        <taxon>Eukaryota</taxon>
        <taxon>Viridiplantae</taxon>
        <taxon>Streptophyta</taxon>
        <taxon>Embryophyta</taxon>
        <taxon>Tracheophyta</taxon>
        <taxon>Lycopodiopsida</taxon>
        <taxon>Lycopodiales</taxon>
        <taxon>Lycopodiaceae</taxon>
        <taxon>Lycopodielloideae</taxon>
        <taxon>Palhinhaea</taxon>
    </lineage>
</organism>
<feature type="chain" id="PRO_0000143495" description="Maturase K">
    <location>
        <begin position="1"/>
        <end position="517"/>
    </location>
</feature>
<reference key="1">
    <citation type="journal article" date="2004" name="Taiwania">
        <title>The evolution of chloroplast matK genes, including identification of new homologues from Ophioglossum petiolatum and two lycophytes.</title>
        <authorList>
            <person name="Chuang S.-L."/>
            <person name="Hu J.-M."/>
        </authorList>
    </citation>
    <scope>NUCLEOTIDE SEQUENCE [GENOMIC DNA]</scope>
</reference>
<proteinExistence type="inferred from homology"/>
<protein>
    <recommendedName>
        <fullName evidence="1">Maturase K</fullName>
    </recommendedName>
    <alternativeName>
        <fullName evidence="1">Intron maturase</fullName>
    </alternativeName>
</protein>
<gene>
    <name evidence="1" type="primary">matK</name>
</gene>
<sequence>MRTMAWVLARINKLQIHRTNIFWQQRFSYLLLIQDDIYAIACNRFSKKSGLKKIDNSNLNNRFSFITKRRLISEIRQQNQYFFLETSERMRKKRFRQGNQSFCYCINYYFRSIREIVILVLQIVLSVQLQPLLREFNECNSSQSIHSIFPFMEDHFSHRHCLADIKIPYSVHPEILIRFFRRRIQDAPFPHSLRLIVHEYKNIIVLDESIPLEIKKLSTLLWNYYIHEFESTLVSLWKKTWCFVTLYHKALLDRTQSIQKIEHIKEQSHVTKSSWIIILSGSIVPCTKKDSLYYVRYGSNFIVAVGGTKFLIHKWKYYFIIFWQYYFHSWFRPYRICIRKSSKDCLPFLGYILGFRPRIIVVQARVINDLLITSFIMKELCVIIPVFRLIQLLTKEKFCNTSGRPISKSAWTTFQDDDILNQFNHIWKNLFYYYSGCLNRSDLYQIQYILRFSCAKTLACKHKSTIRVVWKKYGSRLFPRSSFYKKQELILSNVHFHKRRFWYLDLIQMYFIADLLR</sequence>
<dbReference type="EMBL" id="AY826399">
    <property type="protein sequence ID" value="AAX12244.1"/>
    <property type="molecule type" value="Genomic_DNA"/>
</dbReference>
<dbReference type="GO" id="GO:0009507">
    <property type="term" value="C:chloroplast"/>
    <property type="evidence" value="ECO:0007669"/>
    <property type="project" value="UniProtKB-SubCell"/>
</dbReference>
<dbReference type="GO" id="GO:0003723">
    <property type="term" value="F:RNA binding"/>
    <property type="evidence" value="ECO:0007669"/>
    <property type="project" value="UniProtKB-KW"/>
</dbReference>
<dbReference type="GO" id="GO:0006397">
    <property type="term" value="P:mRNA processing"/>
    <property type="evidence" value="ECO:0007669"/>
    <property type="project" value="UniProtKB-KW"/>
</dbReference>
<dbReference type="GO" id="GO:0008380">
    <property type="term" value="P:RNA splicing"/>
    <property type="evidence" value="ECO:0007669"/>
    <property type="project" value="UniProtKB-UniRule"/>
</dbReference>
<dbReference type="GO" id="GO:0008033">
    <property type="term" value="P:tRNA processing"/>
    <property type="evidence" value="ECO:0007669"/>
    <property type="project" value="UniProtKB-KW"/>
</dbReference>
<dbReference type="HAMAP" id="MF_01390">
    <property type="entry name" value="MatK"/>
    <property type="match status" value="1"/>
</dbReference>
<dbReference type="InterPro" id="IPR024937">
    <property type="entry name" value="Domain_X"/>
</dbReference>
<dbReference type="InterPro" id="IPR002866">
    <property type="entry name" value="Maturase_MatK"/>
</dbReference>
<dbReference type="InterPro" id="IPR024942">
    <property type="entry name" value="Maturase_MatK_N"/>
</dbReference>
<dbReference type="PANTHER" id="PTHR34811">
    <property type="entry name" value="MATURASE K"/>
    <property type="match status" value="1"/>
</dbReference>
<dbReference type="PANTHER" id="PTHR34811:SF1">
    <property type="entry name" value="MATURASE K"/>
    <property type="match status" value="1"/>
</dbReference>
<dbReference type="Pfam" id="PF01348">
    <property type="entry name" value="Intron_maturas2"/>
    <property type="match status" value="1"/>
</dbReference>
<dbReference type="Pfam" id="PF01824">
    <property type="entry name" value="MatK_N"/>
    <property type="match status" value="1"/>
</dbReference>
<keyword id="KW-0150">Chloroplast</keyword>
<keyword id="KW-0507">mRNA processing</keyword>
<keyword id="KW-0934">Plastid</keyword>
<keyword id="KW-0694">RNA-binding</keyword>
<keyword id="KW-0819">tRNA processing</keyword>